<gene>
    <name evidence="1" type="primary">glmM</name>
    <name type="ordered locus">SP70585_1601</name>
</gene>
<keyword id="KW-0413">Isomerase</keyword>
<keyword id="KW-0460">Magnesium</keyword>
<keyword id="KW-0479">Metal-binding</keyword>
<keyword id="KW-0597">Phosphoprotein</keyword>
<comment type="function">
    <text evidence="1">Catalyzes the conversion of glucosamine-6-phosphate to glucosamine-1-phosphate.</text>
</comment>
<comment type="catalytic activity">
    <reaction evidence="1">
        <text>alpha-D-glucosamine 1-phosphate = D-glucosamine 6-phosphate</text>
        <dbReference type="Rhea" id="RHEA:23424"/>
        <dbReference type="ChEBI" id="CHEBI:58516"/>
        <dbReference type="ChEBI" id="CHEBI:58725"/>
        <dbReference type="EC" id="5.4.2.10"/>
    </reaction>
</comment>
<comment type="cofactor">
    <cofactor evidence="1">
        <name>Mg(2+)</name>
        <dbReference type="ChEBI" id="CHEBI:18420"/>
    </cofactor>
    <text evidence="1">Binds 1 Mg(2+) ion per subunit.</text>
</comment>
<comment type="PTM">
    <text evidence="1">Activated by phosphorylation.</text>
</comment>
<comment type="similarity">
    <text evidence="1">Belongs to the phosphohexose mutase family.</text>
</comment>
<reference key="1">
    <citation type="journal article" date="2010" name="Genome Biol.">
        <title>Structure and dynamics of the pan-genome of Streptococcus pneumoniae and closely related species.</title>
        <authorList>
            <person name="Donati C."/>
            <person name="Hiller N.L."/>
            <person name="Tettelin H."/>
            <person name="Muzzi A."/>
            <person name="Croucher N.J."/>
            <person name="Angiuoli S.V."/>
            <person name="Oggioni M."/>
            <person name="Dunning Hotopp J.C."/>
            <person name="Hu F.Z."/>
            <person name="Riley D.R."/>
            <person name="Covacci A."/>
            <person name="Mitchell T.J."/>
            <person name="Bentley S.D."/>
            <person name="Kilian M."/>
            <person name="Ehrlich G.D."/>
            <person name="Rappuoli R."/>
            <person name="Moxon E.R."/>
            <person name="Masignani V."/>
        </authorList>
    </citation>
    <scope>NUCLEOTIDE SEQUENCE [LARGE SCALE GENOMIC DNA]</scope>
    <source>
        <strain>70585</strain>
    </source>
</reference>
<proteinExistence type="inferred from homology"/>
<name>GLMM_STRP7</name>
<feature type="chain" id="PRO_1000185384" description="Phosphoglucosamine mutase">
    <location>
        <begin position="1"/>
        <end position="450"/>
    </location>
</feature>
<feature type="active site" description="Phosphoserine intermediate" evidence="1">
    <location>
        <position position="101"/>
    </location>
</feature>
<feature type="binding site" description="via phosphate group" evidence="1">
    <location>
        <position position="101"/>
    </location>
    <ligand>
        <name>Mg(2+)</name>
        <dbReference type="ChEBI" id="CHEBI:18420"/>
    </ligand>
</feature>
<feature type="binding site" evidence="1">
    <location>
        <position position="240"/>
    </location>
    <ligand>
        <name>Mg(2+)</name>
        <dbReference type="ChEBI" id="CHEBI:18420"/>
    </ligand>
</feature>
<feature type="binding site" evidence="1">
    <location>
        <position position="242"/>
    </location>
    <ligand>
        <name>Mg(2+)</name>
        <dbReference type="ChEBI" id="CHEBI:18420"/>
    </ligand>
</feature>
<feature type="binding site" evidence="1">
    <location>
        <position position="244"/>
    </location>
    <ligand>
        <name>Mg(2+)</name>
        <dbReference type="ChEBI" id="CHEBI:18420"/>
    </ligand>
</feature>
<feature type="modified residue" description="Phosphoserine" evidence="1">
    <location>
        <position position="101"/>
    </location>
</feature>
<dbReference type="EC" id="5.4.2.10" evidence="1"/>
<dbReference type="EMBL" id="CP000918">
    <property type="protein sequence ID" value="ACO17934.1"/>
    <property type="molecule type" value="Genomic_DNA"/>
</dbReference>
<dbReference type="RefSeq" id="WP_000521410.1">
    <property type="nucleotide sequence ID" value="NC_012468.1"/>
</dbReference>
<dbReference type="SMR" id="C1C8F1"/>
<dbReference type="KEGG" id="snm:SP70585_1601"/>
<dbReference type="HOGENOM" id="CLU_016950_7_0_9"/>
<dbReference type="Proteomes" id="UP000002211">
    <property type="component" value="Chromosome"/>
</dbReference>
<dbReference type="GO" id="GO:0005829">
    <property type="term" value="C:cytosol"/>
    <property type="evidence" value="ECO:0007669"/>
    <property type="project" value="TreeGrafter"/>
</dbReference>
<dbReference type="GO" id="GO:0000287">
    <property type="term" value="F:magnesium ion binding"/>
    <property type="evidence" value="ECO:0007669"/>
    <property type="project" value="UniProtKB-UniRule"/>
</dbReference>
<dbReference type="GO" id="GO:0008966">
    <property type="term" value="F:phosphoglucosamine mutase activity"/>
    <property type="evidence" value="ECO:0007669"/>
    <property type="project" value="UniProtKB-UniRule"/>
</dbReference>
<dbReference type="GO" id="GO:0004615">
    <property type="term" value="F:phosphomannomutase activity"/>
    <property type="evidence" value="ECO:0007669"/>
    <property type="project" value="TreeGrafter"/>
</dbReference>
<dbReference type="GO" id="GO:0005975">
    <property type="term" value="P:carbohydrate metabolic process"/>
    <property type="evidence" value="ECO:0007669"/>
    <property type="project" value="InterPro"/>
</dbReference>
<dbReference type="GO" id="GO:0009252">
    <property type="term" value="P:peptidoglycan biosynthetic process"/>
    <property type="evidence" value="ECO:0007669"/>
    <property type="project" value="TreeGrafter"/>
</dbReference>
<dbReference type="GO" id="GO:0006048">
    <property type="term" value="P:UDP-N-acetylglucosamine biosynthetic process"/>
    <property type="evidence" value="ECO:0007669"/>
    <property type="project" value="TreeGrafter"/>
</dbReference>
<dbReference type="CDD" id="cd05802">
    <property type="entry name" value="GlmM"/>
    <property type="match status" value="1"/>
</dbReference>
<dbReference type="FunFam" id="3.30.310.50:FF:000001">
    <property type="entry name" value="Phosphoglucosamine mutase"/>
    <property type="match status" value="1"/>
</dbReference>
<dbReference type="FunFam" id="3.40.120.10:FF:000001">
    <property type="entry name" value="Phosphoglucosamine mutase"/>
    <property type="match status" value="1"/>
</dbReference>
<dbReference type="FunFam" id="3.40.120.10:FF:000002">
    <property type="entry name" value="Phosphoglucosamine mutase"/>
    <property type="match status" value="1"/>
</dbReference>
<dbReference type="Gene3D" id="3.40.120.10">
    <property type="entry name" value="Alpha-D-Glucose-1,6-Bisphosphate, subunit A, domain 3"/>
    <property type="match status" value="3"/>
</dbReference>
<dbReference type="Gene3D" id="3.30.310.50">
    <property type="entry name" value="Alpha-D-phosphohexomutase, C-terminal domain"/>
    <property type="match status" value="1"/>
</dbReference>
<dbReference type="HAMAP" id="MF_01554_B">
    <property type="entry name" value="GlmM_B"/>
    <property type="match status" value="1"/>
</dbReference>
<dbReference type="InterPro" id="IPR005844">
    <property type="entry name" value="A-D-PHexomutase_a/b/a-I"/>
</dbReference>
<dbReference type="InterPro" id="IPR016055">
    <property type="entry name" value="A-D-PHexomutase_a/b/a-I/II/III"/>
</dbReference>
<dbReference type="InterPro" id="IPR005845">
    <property type="entry name" value="A-D-PHexomutase_a/b/a-II"/>
</dbReference>
<dbReference type="InterPro" id="IPR005846">
    <property type="entry name" value="A-D-PHexomutase_a/b/a-III"/>
</dbReference>
<dbReference type="InterPro" id="IPR005843">
    <property type="entry name" value="A-D-PHexomutase_C"/>
</dbReference>
<dbReference type="InterPro" id="IPR036900">
    <property type="entry name" value="A-D-PHexomutase_C_sf"/>
</dbReference>
<dbReference type="InterPro" id="IPR016066">
    <property type="entry name" value="A-D-PHexomutase_CS"/>
</dbReference>
<dbReference type="InterPro" id="IPR005841">
    <property type="entry name" value="Alpha-D-phosphohexomutase_SF"/>
</dbReference>
<dbReference type="InterPro" id="IPR006352">
    <property type="entry name" value="GlmM_bact"/>
</dbReference>
<dbReference type="InterPro" id="IPR050060">
    <property type="entry name" value="Phosphoglucosamine_mutase"/>
</dbReference>
<dbReference type="NCBIfam" id="TIGR01455">
    <property type="entry name" value="glmM"/>
    <property type="match status" value="1"/>
</dbReference>
<dbReference type="PANTHER" id="PTHR42946:SF1">
    <property type="entry name" value="PHOSPHOGLUCOMUTASE (ALPHA-D-GLUCOSE-1,6-BISPHOSPHATE-DEPENDENT)"/>
    <property type="match status" value="1"/>
</dbReference>
<dbReference type="PANTHER" id="PTHR42946">
    <property type="entry name" value="PHOSPHOHEXOSE MUTASE"/>
    <property type="match status" value="1"/>
</dbReference>
<dbReference type="Pfam" id="PF02878">
    <property type="entry name" value="PGM_PMM_I"/>
    <property type="match status" value="1"/>
</dbReference>
<dbReference type="Pfam" id="PF02879">
    <property type="entry name" value="PGM_PMM_II"/>
    <property type="match status" value="1"/>
</dbReference>
<dbReference type="Pfam" id="PF02880">
    <property type="entry name" value="PGM_PMM_III"/>
    <property type="match status" value="1"/>
</dbReference>
<dbReference type="Pfam" id="PF00408">
    <property type="entry name" value="PGM_PMM_IV"/>
    <property type="match status" value="1"/>
</dbReference>
<dbReference type="PRINTS" id="PR00509">
    <property type="entry name" value="PGMPMM"/>
</dbReference>
<dbReference type="SUPFAM" id="SSF55957">
    <property type="entry name" value="Phosphoglucomutase, C-terminal domain"/>
    <property type="match status" value="1"/>
</dbReference>
<dbReference type="SUPFAM" id="SSF53738">
    <property type="entry name" value="Phosphoglucomutase, first 3 domains"/>
    <property type="match status" value="3"/>
</dbReference>
<dbReference type="PROSITE" id="PS00710">
    <property type="entry name" value="PGM_PMM"/>
    <property type="match status" value="1"/>
</dbReference>
<protein>
    <recommendedName>
        <fullName evidence="1">Phosphoglucosamine mutase</fullName>
        <ecNumber evidence="1">5.4.2.10</ecNumber>
    </recommendedName>
</protein>
<accession>C1C8F1</accession>
<evidence type="ECO:0000255" key="1">
    <source>
        <dbReference type="HAMAP-Rule" id="MF_01554"/>
    </source>
</evidence>
<organism>
    <name type="scientific">Streptococcus pneumoniae (strain 70585)</name>
    <dbReference type="NCBI Taxonomy" id="488221"/>
    <lineage>
        <taxon>Bacteria</taxon>
        <taxon>Bacillati</taxon>
        <taxon>Bacillota</taxon>
        <taxon>Bacilli</taxon>
        <taxon>Lactobacillales</taxon>
        <taxon>Streptococcaceae</taxon>
        <taxon>Streptococcus</taxon>
    </lineage>
</organism>
<sequence length="450" mass="48124">MGKYFGTDGVRGEANLELTPELAFKLGRFGGYVLSQHETEAPKVFVGRDTRISGEMLESALVAGLLSVGIHVYKLGVLATPAVAYLVETEGASAGVMISASHNPALDNGIKFFGGDGFKLDDEKEAEIEALLDAEEDTLPRPSAEGLGILVDYPEGLRKYEGYLVSTGTPLDGMKVALDTANGAASTSARQIFADLGAQLTVIGETPDGLNINLNVGSTHPEALQEVVKESGSAIGLAFDGDSDRLIAVDENGDIVDGDKIMYIIGKYLSEKGQLAQNTIVTTVMSNLGFHKALNREGINKAVTAVGDRYVVEEMRKSGYNLGGEQSGHVILMDYNTTGDGQLSAVQLTKIMKETGKSLSELAAEVTIYPQKLVNIRVENVMKEKAMEVPAIKAIIEKMEEEMAGNGRILVRPSGTEPLLRVMAEAPTTEEVDYYVDTITDVVRAEIGID</sequence>